<sequence>MELKGVHQQNGTSNGTGAVGAEGESAPPTAPATAEAAASLETTTEKVDAEQQKPERTNWGNGLEFLMSCISVSVGLGNVWRFPFTAYENGGGAFLIPYIIVLFLIGKPMYYLEMIMGQFTSQGTVKIWSVVPGFVGVGYGQAFATICIITYYSSLLALTLYYLFVSFQSVLPWSYCWEEWMNCVDSRPQEDTDALLLSSSNVTNVTALTDTVKLQSSSELYFLNVVIKEKMDISDGIGDPDWKLTLALFVSWVVIFLVIMRGVKSSGKAAYFLALFPYVVLFILLVRAVTLEGARDGIIFFLEPQWGELLNPTVWKNAVVQCFFSLAVGSGPIIMFASYNRFDHGIYRDAMIVTTLDTLTSLLGGITIFAILGNLAHNLQIENIRDVVRSGTGLAFISYPDAISKFQAVPQLFSVLFFFMLFVLGIGSIVALQSTIVTILCDQFKSWKYWKVALATSICGFLMGLVYVTPGGQWILTLVDFYGGTYVVFILAIFELAGIVWIYGMQNFCDDVEFMCNRRVSLYWRVCWSFFTPVMMIVIFIYSMVTIEPITYSEQFFPEAGNVAGWLLFGIGAAQFPLWWMWYISQHREGSLGQSFVASLRPSDKWGPANPETKRQWVIFKNEKAAQRATKKQSSKLGAFWQKLGHFCGSNT</sequence>
<comment type="function">
    <text evidence="1">Unusual broad substrate spectrum amino acid:sodium cotransporter that promotes absorption of the D isomers of essential amino acids. Neutral amino acids are the preferred substrates, especially methionine and phenylalanine (By similarity).</text>
</comment>
<comment type="subcellular location">
    <subcellularLocation>
        <location evidence="5">Membrane</location>
        <topology evidence="5">Multi-pass membrane protein</topology>
    </subcellularLocation>
</comment>
<comment type="similarity">
    <text evidence="5">Belongs to the sodium:neurotransmitter symporter (SNF) (TC 2.A.22) family.</text>
</comment>
<accession>B4GVM9</accession>
<evidence type="ECO:0000250" key="1"/>
<evidence type="ECO:0000250" key="2">
    <source>
        <dbReference type="UniProtKB" id="Q9W4C5"/>
    </source>
</evidence>
<evidence type="ECO:0000255" key="3"/>
<evidence type="ECO:0000256" key="4">
    <source>
        <dbReference type="SAM" id="MobiDB-lite"/>
    </source>
</evidence>
<evidence type="ECO:0000305" key="5"/>
<evidence type="ECO:0000312" key="6">
    <source>
        <dbReference type="EMBL" id="EDW26724.1"/>
    </source>
</evidence>
<proteinExistence type="inferred from homology"/>
<feature type="chain" id="PRO_0000386585" description="Sodium-dependent nutrient amino acid transporter 1">
    <location>
        <begin position="1"/>
        <end position="652"/>
    </location>
</feature>
<feature type="topological domain" description="Cytoplasmic" evidence="3">
    <location>
        <begin position="1"/>
        <end position="58"/>
    </location>
</feature>
<feature type="transmembrane region" description="Helical; Name=1" evidence="3">
    <location>
        <begin position="59"/>
        <end position="79"/>
    </location>
</feature>
<feature type="transmembrane region" description="Helical; Name=2" evidence="3">
    <location>
        <begin position="92"/>
        <end position="112"/>
    </location>
</feature>
<feature type="transmembrane region" description="Helical; Name=3" evidence="3">
    <location>
        <begin position="130"/>
        <end position="150"/>
    </location>
</feature>
<feature type="transmembrane region" description="Helical; Name=4" evidence="3">
    <location>
        <begin position="155"/>
        <end position="175"/>
    </location>
</feature>
<feature type="transmembrane region" description="Helical; Name=5" evidence="3">
    <location>
        <begin position="240"/>
        <end position="260"/>
    </location>
</feature>
<feature type="transmembrane region" description="Helical; Name=6" evidence="3">
    <location>
        <begin position="269"/>
        <end position="289"/>
    </location>
</feature>
<feature type="transmembrane region" description="Helical; Name=7" evidence="3">
    <location>
        <begin position="318"/>
        <end position="338"/>
    </location>
</feature>
<feature type="transmembrane region" description="Helical; Name=8" evidence="3">
    <location>
        <begin position="352"/>
        <end position="372"/>
    </location>
</feature>
<feature type="transmembrane region" description="Helical; Name=9" evidence="3">
    <location>
        <begin position="412"/>
        <end position="432"/>
    </location>
</feature>
<feature type="transmembrane region" description="Helical; Name=10" evidence="3">
    <location>
        <begin position="458"/>
        <end position="478"/>
    </location>
</feature>
<feature type="transmembrane region" description="Helical; Name=11" evidence="3">
    <location>
        <begin position="485"/>
        <end position="505"/>
    </location>
</feature>
<feature type="transmembrane region" description="Helical; Name=12" evidence="3">
    <location>
        <begin position="527"/>
        <end position="547"/>
    </location>
</feature>
<feature type="transmembrane region" description="Helical; Name=13" evidence="3">
    <location>
        <begin position="564"/>
        <end position="584"/>
    </location>
</feature>
<feature type="region of interest" description="Disordered" evidence="4">
    <location>
        <begin position="1"/>
        <end position="54"/>
    </location>
</feature>
<feature type="compositionally biased region" description="Polar residues" evidence="4">
    <location>
        <begin position="7"/>
        <end position="16"/>
    </location>
</feature>
<feature type="compositionally biased region" description="Low complexity" evidence="4">
    <location>
        <begin position="21"/>
        <end position="42"/>
    </location>
</feature>
<feature type="compositionally biased region" description="Basic and acidic residues" evidence="4">
    <location>
        <begin position="43"/>
        <end position="54"/>
    </location>
</feature>
<feature type="glycosylation site" description="N-linked (GlcNAc...) asparagine" evidence="3">
    <location>
        <position position="201"/>
    </location>
</feature>
<feature type="glycosylation site" description="N-linked (GlcNAc...) asparagine" evidence="3">
    <location>
        <position position="204"/>
    </location>
</feature>
<keyword id="KW-0029">Amino-acid transport</keyword>
<keyword id="KW-0325">Glycoprotein</keyword>
<keyword id="KW-0406">Ion transport</keyword>
<keyword id="KW-0472">Membrane</keyword>
<keyword id="KW-1185">Reference proteome</keyword>
<keyword id="KW-0915">Sodium</keyword>
<keyword id="KW-0739">Sodium transport</keyword>
<keyword id="KW-0769">Symport</keyword>
<keyword id="KW-0812">Transmembrane</keyword>
<keyword id="KW-1133">Transmembrane helix</keyword>
<keyword id="KW-0813">Transport</keyword>
<protein>
    <recommendedName>
        <fullName evidence="2">Sodium-dependent nutrient amino acid transporter 1</fullName>
    </recommendedName>
</protein>
<gene>
    <name evidence="2" type="primary">NAAT1</name>
    <name type="ORF">GL14641</name>
</gene>
<dbReference type="EMBL" id="CH479193">
    <property type="protein sequence ID" value="EDW26724.1"/>
    <property type="molecule type" value="Genomic_DNA"/>
</dbReference>
<dbReference type="SMR" id="B4GVM9"/>
<dbReference type="GlyCosmos" id="B4GVM9">
    <property type="glycosylation" value="2 sites, No reported glycans"/>
</dbReference>
<dbReference type="EnsemblMetazoa" id="FBtr0180256">
    <property type="protein sequence ID" value="FBpp0178748"/>
    <property type="gene ID" value="FBgn0152245"/>
</dbReference>
<dbReference type="EnsemblMetazoa" id="XM_002022622.2">
    <property type="protein sequence ID" value="XP_002022658.1"/>
    <property type="gene ID" value="LOC6597510"/>
</dbReference>
<dbReference type="GeneID" id="6597510"/>
<dbReference type="KEGG" id="dpe:6597510"/>
<dbReference type="CTD" id="31457"/>
<dbReference type="eggNOG" id="KOG3660">
    <property type="taxonomic scope" value="Eukaryota"/>
</dbReference>
<dbReference type="HOGENOM" id="CLU_006855_9_5_1"/>
<dbReference type="OMA" id="LQNFCDD"/>
<dbReference type="OrthoDB" id="6581954at2759"/>
<dbReference type="PhylomeDB" id="B4GVM9"/>
<dbReference type="Proteomes" id="UP000008744">
    <property type="component" value="Unassembled WGS sequence"/>
</dbReference>
<dbReference type="GO" id="GO:0005886">
    <property type="term" value="C:plasma membrane"/>
    <property type="evidence" value="ECO:0000305"/>
    <property type="project" value="UniProtKB"/>
</dbReference>
<dbReference type="GO" id="GO:0005283">
    <property type="term" value="F:amino acid:sodium symporter activity"/>
    <property type="evidence" value="ECO:0000250"/>
    <property type="project" value="UniProtKB"/>
</dbReference>
<dbReference type="GO" id="GO:0042943">
    <property type="term" value="F:D-amino acid transmembrane transporter activity"/>
    <property type="evidence" value="ECO:0000250"/>
    <property type="project" value="UniProtKB"/>
</dbReference>
<dbReference type="GO" id="GO:0015179">
    <property type="term" value="F:L-amino acid transmembrane transporter activity"/>
    <property type="evidence" value="ECO:0007669"/>
    <property type="project" value="EnsemblMetazoa"/>
</dbReference>
<dbReference type="GO" id="GO:0015175">
    <property type="term" value="F:neutral L-amino acid transmembrane transporter activity"/>
    <property type="evidence" value="ECO:0000250"/>
    <property type="project" value="UniProtKB"/>
</dbReference>
<dbReference type="GO" id="GO:0089718">
    <property type="term" value="P:amino acid import across plasma membrane"/>
    <property type="evidence" value="ECO:0007669"/>
    <property type="project" value="TreeGrafter"/>
</dbReference>
<dbReference type="GO" id="GO:0042940">
    <property type="term" value="P:D-amino acid transport"/>
    <property type="evidence" value="ECO:0000250"/>
    <property type="project" value="UniProtKB"/>
</dbReference>
<dbReference type="GO" id="GO:0015804">
    <property type="term" value="P:neutral amino acid transport"/>
    <property type="evidence" value="ECO:0000250"/>
    <property type="project" value="UniProtKB"/>
</dbReference>
<dbReference type="GO" id="GO:0006814">
    <property type="term" value="P:sodium ion transport"/>
    <property type="evidence" value="ECO:0000250"/>
    <property type="project" value="UniProtKB"/>
</dbReference>
<dbReference type="CDD" id="cd10324">
    <property type="entry name" value="SLC6sbd"/>
    <property type="match status" value="1"/>
</dbReference>
<dbReference type="InterPro" id="IPR000175">
    <property type="entry name" value="Na/ntran_symport"/>
</dbReference>
<dbReference type="InterPro" id="IPR037272">
    <property type="entry name" value="SNS_sf"/>
</dbReference>
<dbReference type="PANTHER" id="PTHR11616:SF321">
    <property type="entry name" value="SODIUM-DEPENDENT NUTRIENT AMINO ACID TRANSPORTER 1-RELATED"/>
    <property type="match status" value="1"/>
</dbReference>
<dbReference type="PANTHER" id="PTHR11616">
    <property type="entry name" value="SODIUM/CHLORIDE DEPENDENT TRANSPORTER"/>
    <property type="match status" value="1"/>
</dbReference>
<dbReference type="Pfam" id="PF00209">
    <property type="entry name" value="SNF"/>
    <property type="match status" value="1"/>
</dbReference>
<dbReference type="PRINTS" id="PR00176">
    <property type="entry name" value="NANEUSMPORT"/>
</dbReference>
<dbReference type="SUPFAM" id="SSF161070">
    <property type="entry name" value="SNF-like"/>
    <property type="match status" value="1"/>
</dbReference>
<dbReference type="PROSITE" id="PS00610">
    <property type="entry name" value="NA_NEUROTRAN_SYMP_1"/>
    <property type="match status" value="1"/>
</dbReference>
<dbReference type="PROSITE" id="PS50267">
    <property type="entry name" value="NA_NEUROTRAN_SYMP_3"/>
    <property type="match status" value="1"/>
</dbReference>
<reference evidence="6" key="1">
    <citation type="journal article" date="2007" name="Nature">
        <title>Evolution of genes and genomes on the Drosophila phylogeny.</title>
        <authorList>
            <consortium name="Drosophila 12 genomes consortium"/>
        </authorList>
    </citation>
    <scope>NUCLEOTIDE SEQUENCE [LARGE SCALE GENOMIC DNA]</scope>
    <source>
        <strain>MSH-3 / Tucson 14011-0111.49</strain>
    </source>
</reference>
<name>NAAT1_DROPE</name>
<organism>
    <name type="scientific">Drosophila persimilis</name>
    <name type="common">Fruit fly</name>
    <dbReference type="NCBI Taxonomy" id="7234"/>
    <lineage>
        <taxon>Eukaryota</taxon>
        <taxon>Metazoa</taxon>
        <taxon>Ecdysozoa</taxon>
        <taxon>Arthropoda</taxon>
        <taxon>Hexapoda</taxon>
        <taxon>Insecta</taxon>
        <taxon>Pterygota</taxon>
        <taxon>Neoptera</taxon>
        <taxon>Endopterygota</taxon>
        <taxon>Diptera</taxon>
        <taxon>Brachycera</taxon>
        <taxon>Muscomorpha</taxon>
        <taxon>Ephydroidea</taxon>
        <taxon>Drosophilidae</taxon>
        <taxon>Drosophila</taxon>
        <taxon>Sophophora</taxon>
    </lineage>
</organism>